<reference key="1">
    <citation type="journal article" date="1990" name="Eur. J. Biochem.">
        <title>Drosophila contains three genes that encode distinct isoforms of protein phosphatase 1.</title>
        <authorList>
            <person name="Dombradi V."/>
            <person name="Axton J.M."/>
            <person name="Brewis N.D."/>
            <person name="da Cruz e Silva E.F."/>
            <person name="Alphey L."/>
            <person name="Cohen P.T.W."/>
        </authorList>
    </citation>
    <scope>NUCLEOTIDE SEQUENCE [MRNA]</scope>
    <source>
        <tissue>Embryo</tissue>
    </source>
</reference>
<reference key="2">
    <citation type="journal article" date="2000" name="Curr. Biol.">
        <title>Protein phosphatase 1beta is required for the maintenance of muscle attachments.</title>
        <authorList>
            <person name="Raghavan S."/>
            <person name="Williams I."/>
            <person name="Aslam H."/>
            <person name="Thomas D."/>
            <person name="Szoor B."/>
            <person name="Morgan G."/>
            <person name="Gross S."/>
            <person name="Turner J."/>
            <person name="Fernandes J."/>
            <person name="VijayRaghavan K."/>
            <person name="Alphey L."/>
        </authorList>
    </citation>
    <scope>NUCLEOTIDE SEQUENCE [GENOMIC DNA]</scope>
    <scope>FUNCTION</scope>
    <scope>MUTAGENESIS OF TYR-133 AND VAL-284</scope>
</reference>
<reference key="3">
    <citation type="journal article" date="2000" name="Science">
        <title>The genome sequence of Drosophila melanogaster.</title>
        <authorList>
            <person name="Adams M.D."/>
            <person name="Celniker S.E."/>
            <person name="Holt R.A."/>
            <person name="Evans C.A."/>
            <person name="Gocayne J.D."/>
            <person name="Amanatides P.G."/>
            <person name="Scherer S.E."/>
            <person name="Li P.W."/>
            <person name="Hoskins R.A."/>
            <person name="Galle R.F."/>
            <person name="George R.A."/>
            <person name="Lewis S.E."/>
            <person name="Richards S."/>
            <person name="Ashburner M."/>
            <person name="Henderson S.N."/>
            <person name="Sutton G.G."/>
            <person name="Wortman J.R."/>
            <person name="Yandell M.D."/>
            <person name="Zhang Q."/>
            <person name="Chen L.X."/>
            <person name="Brandon R.C."/>
            <person name="Rogers Y.-H.C."/>
            <person name="Blazej R.G."/>
            <person name="Champe M."/>
            <person name="Pfeiffer B.D."/>
            <person name="Wan K.H."/>
            <person name="Doyle C."/>
            <person name="Baxter E.G."/>
            <person name="Helt G."/>
            <person name="Nelson C.R."/>
            <person name="Miklos G.L.G."/>
            <person name="Abril J.F."/>
            <person name="Agbayani A."/>
            <person name="An H.-J."/>
            <person name="Andrews-Pfannkoch C."/>
            <person name="Baldwin D."/>
            <person name="Ballew R.M."/>
            <person name="Basu A."/>
            <person name="Baxendale J."/>
            <person name="Bayraktaroglu L."/>
            <person name="Beasley E.M."/>
            <person name="Beeson K.Y."/>
            <person name="Benos P.V."/>
            <person name="Berman B.P."/>
            <person name="Bhandari D."/>
            <person name="Bolshakov S."/>
            <person name="Borkova D."/>
            <person name="Botchan M.R."/>
            <person name="Bouck J."/>
            <person name="Brokstein P."/>
            <person name="Brottier P."/>
            <person name="Burtis K.C."/>
            <person name="Busam D.A."/>
            <person name="Butler H."/>
            <person name="Cadieu E."/>
            <person name="Center A."/>
            <person name="Chandra I."/>
            <person name="Cherry J.M."/>
            <person name="Cawley S."/>
            <person name="Dahlke C."/>
            <person name="Davenport L.B."/>
            <person name="Davies P."/>
            <person name="de Pablos B."/>
            <person name="Delcher A."/>
            <person name="Deng Z."/>
            <person name="Mays A.D."/>
            <person name="Dew I."/>
            <person name="Dietz S.M."/>
            <person name="Dodson K."/>
            <person name="Doup L.E."/>
            <person name="Downes M."/>
            <person name="Dugan-Rocha S."/>
            <person name="Dunkov B.C."/>
            <person name="Dunn P."/>
            <person name="Durbin K.J."/>
            <person name="Evangelista C.C."/>
            <person name="Ferraz C."/>
            <person name="Ferriera S."/>
            <person name="Fleischmann W."/>
            <person name="Fosler C."/>
            <person name="Gabrielian A.E."/>
            <person name="Garg N.S."/>
            <person name="Gelbart W.M."/>
            <person name="Glasser K."/>
            <person name="Glodek A."/>
            <person name="Gong F."/>
            <person name="Gorrell J.H."/>
            <person name="Gu Z."/>
            <person name="Guan P."/>
            <person name="Harris M."/>
            <person name="Harris N.L."/>
            <person name="Harvey D.A."/>
            <person name="Heiman T.J."/>
            <person name="Hernandez J.R."/>
            <person name="Houck J."/>
            <person name="Hostin D."/>
            <person name="Houston K.A."/>
            <person name="Howland T.J."/>
            <person name="Wei M.-H."/>
            <person name="Ibegwam C."/>
            <person name="Jalali M."/>
            <person name="Kalush F."/>
            <person name="Karpen G.H."/>
            <person name="Ke Z."/>
            <person name="Kennison J.A."/>
            <person name="Ketchum K.A."/>
            <person name="Kimmel B.E."/>
            <person name="Kodira C.D."/>
            <person name="Kraft C.L."/>
            <person name="Kravitz S."/>
            <person name="Kulp D."/>
            <person name="Lai Z."/>
            <person name="Lasko P."/>
            <person name="Lei Y."/>
            <person name="Levitsky A.A."/>
            <person name="Li J.H."/>
            <person name="Li Z."/>
            <person name="Liang Y."/>
            <person name="Lin X."/>
            <person name="Liu X."/>
            <person name="Mattei B."/>
            <person name="McIntosh T.C."/>
            <person name="McLeod M.P."/>
            <person name="McPherson D."/>
            <person name="Merkulov G."/>
            <person name="Milshina N.V."/>
            <person name="Mobarry C."/>
            <person name="Morris J."/>
            <person name="Moshrefi A."/>
            <person name="Mount S.M."/>
            <person name="Moy M."/>
            <person name="Murphy B."/>
            <person name="Murphy L."/>
            <person name="Muzny D.M."/>
            <person name="Nelson D.L."/>
            <person name="Nelson D.R."/>
            <person name="Nelson K.A."/>
            <person name="Nixon K."/>
            <person name="Nusskern D.R."/>
            <person name="Pacleb J.M."/>
            <person name="Palazzolo M."/>
            <person name="Pittman G.S."/>
            <person name="Pan S."/>
            <person name="Pollard J."/>
            <person name="Puri V."/>
            <person name="Reese M.G."/>
            <person name="Reinert K."/>
            <person name="Remington K."/>
            <person name="Saunders R.D.C."/>
            <person name="Scheeler F."/>
            <person name="Shen H."/>
            <person name="Shue B.C."/>
            <person name="Siden-Kiamos I."/>
            <person name="Simpson M."/>
            <person name="Skupski M.P."/>
            <person name="Smith T.J."/>
            <person name="Spier E."/>
            <person name="Spradling A.C."/>
            <person name="Stapleton M."/>
            <person name="Strong R."/>
            <person name="Sun E."/>
            <person name="Svirskas R."/>
            <person name="Tector C."/>
            <person name="Turner R."/>
            <person name="Venter E."/>
            <person name="Wang A.H."/>
            <person name="Wang X."/>
            <person name="Wang Z.-Y."/>
            <person name="Wassarman D.A."/>
            <person name="Weinstock G.M."/>
            <person name="Weissenbach J."/>
            <person name="Williams S.M."/>
            <person name="Woodage T."/>
            <person name="Worley K.C."/>
            <person name="Wu D."/>
            <person name="Yang S."/>
            <person name="Yao Q.A."/>
            <person name="Ye J."/>
            <person name="Yeh R.-F."/>
            <person name="Zaveri J.S."/>
            <person name="Zhan M."/>
            <person name="Zhang G."/>
            <person name="Zhao Q."/>
            <person name="Zheng L."/>
            <person name="Zheng X.H."/>
            <person name="Zhong F.N."/>
            <person name="Zhong W."/>
            <person name="Zhou X."/>
            <person name="Zhu S.C."/>
            <person name="Zhu X."/>
            <person name="Smith H.O."/>
            <person name="Gibbs R.A."/>
            <person name="Myers E.W."/>
            <person name="Rubin G.M."/>
            <person name="Venter J.C."/>
        </authorList>
    </citation>
    <scope>NUCLEOTIDE SEQUENCE [LARGE SCALE GENOMIC DNA]</scope>
    <source>
        <strain>Berkeley</strain>
    </source>
</reference>
<reference key="4">
    <citation type="journal article" date="2002" name="Genome Biol.">
        <title>Annotation of the Drosophila melanogaster euchromatic genome: a systematic review.</title>
        <authorList>
            <person name="Misra S."/>
            <person name="Crosby M.A."/>
            <person name="Mungall C.J."/>
            <person name="Matthews B.B."/>
            <person name="Campbell K.S."/>
            <person name="Hradecky P."/>
            <person name="Huang Y."/>
            <person name="Kaminker J.S."/>
            <person name="Millburn G.H."/>
            <person name="Prochnik S.E."/>
            <person name="Smith C.D."/>
            <person name="Tupy J.L."/>
            <person name="Whitfield E.J."/>
            <person name="Bayraktaroglu L."/>
            <person name="Berman B.P."/>
            <person name="Bettencourt B.R."/>
            <person name="Celniker S.E."/>
            <person name="de Grey A.D.N.J."/>
            <person name="Drysdale R.A."/>
            <person name="Harris N.L."/>
            <person name="Richter J."/>
            <person name="Russo S."/>
            <person name="Schroeder A.J."/>
            <person name="Shu S.Q."/>
            <person name="Stapleton M."/>
            <person name="Yamada C."/>
            <person name="Ashburner M."/>
            <person name="Gelbart W.M."/>
            <person name="Rubin G.M."/>
            <person name="Lewis S.E."/>
        </authorList>
    </citation>
    <scope>GENOME REANNOTATION</scope>
    <source>
        <strain>Berkeley</strain>
    </source>
</reference>
<reference key="5">
    <citation type="journal article" date="2006" name="J. Mol. Biol.">
        <title>Towards a comprehensive analysis of the protein phosphatase 1 interactome in Drosophila.</title>
        <authorList>
            <person name="Bennett D."/>
            <person name="Lyulcheva E."/>
            <person name="Alphey L."/>
        </authorList>
    </citation>
    <scope>INTERACTION WITH NOP17L</scope>
</reference>
<reference key="6">
    <citation type="journal article" date="2008" name="BMC Mol. Biol.">
        <title>Drosophila Uri, a PP1alpha binding protein, is essential for viability, maintenance of DNA integrity and normal transcriptional activity.</title>
        <authorList>
            <person name="Kirchner J."/>
            <person name="Vissi E."/>
            <person name="Gross S."/>
            <person name="Szoor B."/>
            <person name="Rudenko A."/>
            <person name="Alphey L."/>
            <person name="White-Cooper H."/>
        </authorList>
    </citation>
    <scope>CATALYTIC ACTIVITY</scope>
    <scope>INTERACTION WITH URI</scope>
</reference>
<reference key="7">
    <citation type="journal article" date="2008" name="J. Proteome Res.">
        <title>Phosphoproteome analysis of Drosophila melanogaster embryos.</title>
        <authorList>
            <person name="Zhai B."/>
            <person name="Villen J."/>
            <person name="Beausoleil S.A."/>
            <person name="Mintseris J."/>
            <person name="Gygi S.P."/>
        </authorList>
    </citation>
    <scope>PHOSPHORYLATION [LARGE SCALE ANALYSIS] AT THR-315 AND THR-316</scope>
    <scope>IDENTIFICATION BY MASS SPECTROMETRY</scope>
    <source>
        <tissue>Embryo</tissue>
    </source>
</reference>
<accession>P48462</accession>
<accession>Q9W2V5</accession>
<proteinExistence type="evidence at protein level"/>
<organism>
    <name type="scientific">Drosophila melanogaster</name>
    <name type="common">Fruit fly</name>
    <dbReference type="NCBI Taxonomy" id="7227"/>
    <lineage>
        <taxon>Eukaryota</taxon>
        <taxon>Metazoa</taxon>
        <taxon>Ecdysozoa</taxon>
        <taxon>Arthropoda</taxon>
        <taxon>Hexapoda</taxon>
        <taxon>Insecta</taxon>
        <taxon>Pterygota</taxon>
        <taxon>Neoptera</taxon>
        <taxon>Endopterygota</taxon>
        <taxon>Diptera</taxon>
        <taxon>Brachycera</taxon>
        <taxon>Muscomorpha</taxon>
        <taxon>Ephydroidea</taxon>
        <taxon>Drosophilidae</taxon>
        <taxon>Drosophila</taxon>
        <taxon>Sophophora</taxon>
    </lineage>
</organism>
<name>PP1B_DROME</name>
<comment type="function">
    <text evidence="3">Required for cell adhesion in non-muscle tissues and in maintenance of muscle attachment. Vital for larval development.</text>
</comment>
<comment type="catalytic activity">
    <reaction evidence="6">
        <text>O-phospho-L-seryl-[protein] + H2O = L-seryl-[protein] + phosphate</text>
        <dbReference type="Rhea" id="RHEA:20629"/>
        <dbReference type="Rhea" id="RHEA-COMP:9863"/>
        <dbReference type="Rhea" id="RHEA-COMP:11604"/>
        <dbReference type="ChEBI" id="CHEBI:15377"/>
        <dbReference type="ChEBI" id="CHEBI:29999"/>
        <dbReference type="ChEBI" id="CHEBI:43474"/>
        <dbReference type="ChEBI" id="CHEBI:83421"/>
        <dbReference type="EC" id="3.1.3.16"/>
    </reaction>
</comment>
<comment type="catalytic activity">
    <reaction evidence="6">
        <text>O-phospho-L-threonyl-[protein] + H2O = L-threonyl-[protein] + phosphate</text>
        <dbReference type="Rhea" id="RHEA:47004"/>
        <dbReference type="Rhea" id="RHEA-COMP:11060"/>
        <dbReference type="Rhea" id="RHEA-COMP:11605"/>
        <dbReference type="ChEBI" id="CHEBI:15377"/>
        <dbReference type="ChEBI" id="CHEBI:30013"/>
        <dbReference type="ChEBI" id="CHEBI:43474"/>
        <dbReference type="ChEBI" id="CHEBI:61977"/>
        <dbReference type="EC" id="3.1.3.16"/>
    </reaction>
</comment>
<comment type="cofactor">
    <cofactor evidence="1">
        <name>Mn(2+)</name>
        <dbReference type="ChEBI" id="CHEBI:29035"/>
    </cofactor>
    <text evidence="1">Binds 2 manganese ions per subunit.</text>
</comment>
<comment type="subunit">
    <text evidence="4 6">Interacts with Nop17l (PubMed:17007873). Interacts with uri; uri inhibits flw phosphatase activity (PubMed:18412953).</text>
</comment>
<comment type="interaction">
    <interactant intactId="EBI-869621">
        <id>P48462</id>
    </interactant>
    <interactant intactId="EBI-150380">
        <id>Q0E9G3</id>
        <label>Nop17l</label>
    </interactant>
    <organismsDiffer>false</organismsDiffer>
    <experiments>3</experiments>
</comment>
<comment type="similarity">
    <text evidence="7">Belongs to the PPP phosphatase family. PP-1 subfamily.</text>
</comment>
<evidence type="ECO:0000250" key="1"/>
<evidence type="ECO:0000256" key="2">
    <source>
        <dbReference type="SAM" id="MobiDB-lite"/>
    </source>
</evidence>
<evidence type="ECO:0000269" key="3">
    <source>
    </source>
</evidence>
<evidence type="ECO:0000269" key="4">
    <source>
    </source>
</evidence>
<evidence type="ECO:0000269" key="5">
    <source>
    </source>
</evidence>
<evidence type="ECO:0000269" key="6">
    <source>
    </source>
</evidence>
<evidence type="ECO:0000305" key="7"/>
<protein>
    <recommendedName>
        <fullName>Serine/threonine-protein phosphatase beta isoform</fullName>
        <ecNumber evidence="6">3.1.3.16</ecNumber>
    </recommendedName>
    <alternativeName>
        <fullName>Protein flap wing</fullName>
    </alternativeName>
</protein>
<sequence>MGDFDLNVDSLIQRLLEMRSCRTGKQVQMTEAEVRGLCLKSREIFLQQPILLELEAPLIICGDIHGQYTDLLRLFEYGGFPPAANYLFLGDYVDRGKQSLETICLLLAYKIKYPENFFLLRGNHECASINRIYGFYDECKRRYNVKLWKTFTDCFNCLPVAAIIDEKIFCCHGGLSPDLQGMEQIRRLMRPTDVPDTGLLCDLLWSDPDKDVQGWGENDRGVSFTFGVDVVSKFLNRHELDLICRAHQVVEDGYEFFARRQLVTLFSAPNYCGEFDNAGGMMTVDDTLMCSFQILKPSEKKAKYLYSGMNSSRPTTPQRSAPMLATNKKK</sequence>
<gene>
    <name type="primary">flw</name>
    <name type="synonym">PP1-9C</name>
    <name type="synonym">PP1-BETA-9C</name>
    <name type="ORF">CG2096</name>
</gene>
<keyword id="KW-0130">Cell adhesion</keyword>
<keyword id="KW-0378">Hydrolase</keyword>
<keyword id="KW-0464">Manganese</keyword>
<keyword id="KW-0479">Metal-binding</keyword>
<keyword id="KW-0597">Phosphoprotein</keyword>
<keyword id="KW-0904">Protein phosphatase</keyword>
<keyword id="KW-1185">Reference proteome</keyword>
<dbReference type="EC" id="3.1.3.16" evidence="6"/>
<dbReference type="EMBL" id="X56439">
    <property type="protein sequence ID" value="CAA39821.1"/>
    <property type="molecule type" value="mRNA"/>
</dbReference>
<dbReference type="EMBL" id="AJ249214">
    <property type="protein sequence ID" value="CAB59732.1"/>
    <property type="molecule type" value="Genomic_DNA"/>
</dbReference>
<dbReference type="EMBL" id="AJ249215">
    <property type="protein sequence ID" value="CAB59732.1"/>
    <property type="status" value="JOINED"/>
    <property type="molecule type" value="Genomic_DNA"/>
</dbReference>
<dbReference type="EMBL" id="AE014298">
    <property type="protein sequence ID" value="AAF46583.2"/>
    <property type="molecule type" value="Genomic_DNA"/>
</dbReference>
<dbReference type="PIR" id="S13828">
    <property type="entry name" value="S13828"/>
</dbReference>
<dbReference type="RefSeq" id="NP_001259407.1">
    <property type="nucleotide sequence ID" value="NM_001272478.1"/>
</dbReference>
<dbReference type="RefSeq" id="NP_524738.1">
    <property type="nucleotide sequence ID" value="NM_079999.3"/>
</dbReference>
<dbReference type="SMR" id="P48462"/>
<dbReference type="BioGRID" id="68952">
    <property type="interactions" value="134"/>
</dbReference>
<dbReference type="FunCoup" id="P48462">
    <property type="interactions" value="2281"/>
</dbReference>
<dbReference type="IntAct" id="P48462">
    <property type="interactions" value="27"/>
</dbReference>
<dbReference type="STRING" id="7227.FBpp0071381"/>
<dbReference type="iPTMnet" id="P48462"/>
<dbReference type="PaxDb" id="7227-FBpp0071381"/>
<dbReference type="DNASU" id="44289"/>
<dbReference type="EnsemblMetazoa" id="FBtr0071447">
    <property type="protein sequence ID" value="FBpp0071382"/>
    <property type="gene ID" value="FBgn0000711"/>
</dbReference>
<dbReference type="EnsemblMetazoa" id="FBtr0333305">
    <property type="protein sequence ID" value="FBpp0305497"/>
    <property type="gene ID" value="FBgn0000711"/>
</dbReference>
<dbReference type="GeneID" id="44289"/>
<dbReference type="KEGG" id="dme:Dmel_CG2096"/>
<dbReference type="AGR" id="FB:FBgn0000711"/>
<dbReference type="CTD" id="44289"/>
<dbReference type="FlyBase" id="FBgn0000711">
    <property type="gene designation" value="flw"/>
</dbReference>
<dbReference type="VEuPathDB" id="VectorBase:FBgn0000711"/>
<dbReference type="eggNOG" id="KOG0374">
    <property type="taxonomic scope" value="Eukaryota"/>
</dbReference>
<dbReference type="GeneTree" id="ENSGT00940000154644"/>
<dbReference type="HOGENOM" id="CLU_004962_0_0_1"/>
<dbReference type="InParanoid" id="P48462"/>
<dbReference type="OrthoDB" id="1930084at2759"/>
<dbReference type="PhylomeDB" id="P48462"/>
<dbReference type="Reactome" id="R-DME-2565942">
    <property type="pathway name" value="Regulation of PLK1 Activity at G2/M Transition"/>
</dbReference>
<dbReference type="Reactome" id="R-DME-350416">
    <property type="pathway name" value="Regulation of non-muscle Myosin II"/>
</dbReference>
<dbReference type="Reactome" id="R-DME-350480">
    <property type="pathway name" value="Activation of non-muscle Myosin II"/>
</dbReference>
<dbReference type="Reactome" id="R-DME-538898">
    <property type="pathway name" value="Dephosphorylation of TIM"/>
</dbReference>
<dbReference type="Reactome" id="R-DME-5625740">
    <property type="pathway name" value="RHO GTPases activate PKNs"/>
</dbReference>
<dbReference type="Reactome" id="R-DME-5627123">
    <property type="pathway name" value="RHO GTPases activate PAKs"/>
</dbReference>
<dbReference type="SignaLink" id="P48462"/>
<dbReference type="BioGRID-ORCS" id="44289">
    <property type="hits" value="1 hit in 3 CRISPR screens"/>
</dbReference>
<dbReference type="ChiTaRS" id="flw">
    <property type="organism name" value="fly"/>
</dbReference>
<dbReference type="GenomeRNAi" id="44289"/>
<dbReference type="PRO" id="PR:P48462"/>
<dbReference type="Proteomes" id="UP000000803">
    <property type="component" value="Chromosome X"/>
</dbReference>
<dbReference type="Bgee" id="FBgn0000711">
    <property type="expression patterns" value="Expressed in reticular neuropil associated glial cell (Drosophila) in brain and 294 other cell types or tissues"/>
</dbReference>
<dbReference type="ExpressionAtlas" id="P48462">
    <property type="expression patterns" value="baseline and differential"/>
</dbReference>
<dbReference type="GO" id="GO:0005737">
    <property type="term" value="C:cytoplasm"/>
    <property type="evidence" value="ECO:0000318"/>
    <property type="project" value="GO_Central"/>
</dbReference>
<dbReference type="GO" id="GO:0005829">
    <property type="term" value="C:cytosol"/>
    <property type="evidence" value="ECO:0000314"/>
    <property type="project" value="FlyBase"/>
</dbReference>
<dbReference type="GO" id="GO:0005634">
    <property type="term" value="C:nucleus"/>
    <property type="evidence" value="ECO:0000314"/>
    <property type="project" value="FlyBase"/>
</dbReference>
<dbReference type="GO" id="GO:0000164">
    <property type="term" value="C:protein phosphatase type 1 complex"/>
    <property type="evidence" value="ECO:0000314"/>
    <property type="project" value="FlyBase"/>
</dbReference>
<dbReference type="GO" id="GO:0046872">
    <property type="term" value="F:metal ion binding"/>
    <property type="evidence" value="ECO:0007669"/>
    <property type="project" value="UniProtKB-KW"/>
</dbReference>
<dbReference type="GO" id="GO:0017018">
    <property type="term" value="F:myosin phosphatase activity"/>
    <property type="evidence" value="ECO:0000314"/>
    <property type="project" value="FlyBase"/>
</dbReference>
<dbReference type="GO" id="GO:0004722">
    <property type="term" value="F:protein serine/threonine phosphatase activity"/>
    <property type="evidence" value="ECO:0000315"/>
    <property type="project" value="FlyBase"/>
</dbReference>
<dbReference type="GO" id="GO:0007155">
    <property type="term" value="P:cell adhesion"/>
    <property type="evidence" value="ECO:0007669"/>
    <property type="project" value="UniProtKB-KW"/>
</dbReference>
<dbReference type="GO" id="GO:0007059">
    <property type="term" value="P:chromosome segregation"/>
    <property type="evidence" value="ECO:0000315"/>
    <property type="project" value="FlyBase"/>
</dbReference>
<dbReference type="GO" id="GO:0007301">
    <property type="term" value="P:female germline ring canal formation"/>
    <property type="evidence" value="ECO:0000315"/>
    <property type="project" value="FlyBase"/>
</dbReference>
<dbReference type="GO" id="GO:0007476">
    <property type="term" value="P:imaginal disc-derived wing morphogenesis"/>
    <property type="evidence" value="ECO:0000315"/>
    <property type="project" value="FlyBase"/>
</dbReference>
<dbReference type="GO" id="GO:0007498">
    <property type="term" value="P:mesoderm development"/>
    <property type="evidence" value="ECO:0000303"/>
    <property type="project" value="FlyBase"/>
</dbReference>
<dbReference type="GO" id="GO:0030514">
    <property type="term" value="P:negative regulation of BMP signaling pathway"/>
    <property type="evidence" value="ECO:0000316"/>
    <property type="project" value="FlyBase"/>
</dbReference>
<dbReference type="GO" id="GO:0046329">
    <property type="term" value="P:negative regulation of JNK cascade"/>
    <property type="evidence" value="ECO:0000316"/>
    <property type="project" value="FlyBase"/>
</dbReference>
<dbReference type="GO" id="GO:0045879">
    <property type="term" value="P:negative regulation of smoothened signaling pathway"/>
    <property type="evidence" value="ECO:0000316"/>
    <property type="project" value="FlyBase"/>
</dbReference>
<dbReference type="GO" id="GO:0007312">
    <property type="term" value="P:oocyte nucleus migration involved in oocyte dorsal/ventral axis specification"/>
    <property type="evidence" value="ECO:0000315"/>
    <property type="project" value="FlyBase"/>
</dbReference>
<dbReference type="GO" id="GO:0007300">
    <property type="term" value="P:ovarian nurse cell to oocyte transport"/>
    <property type="evidence" value="ECO:0000315"/>
    <property type="project" value="FlyBase"/>
</dbReference>
<dbReference type="GO" id="GO:0090263">
    <property type="term" value="P:positive regulation of canonical Wnt signaling pathway"/>
    <property type="evidence" value="ECO:0000316"/>
    <property type="project" value="FlyBase"/>
</dbReference>
<dbReference type="GO" id="GO:0031991">
    <property type="term" value="P:regulation of actomyosin contractile ring contraction"/>
    <property type="evidence" value="ECO:0000315"/>
    <property type="project" value="FlyBase"/>
</dbReference>
<dbReference type="GO" id="GO:0005979">
    <property type="term" value="P:regulation of glycogen biosynthetic process"/>
    <property type="evidence" value="ECO:0000250"/>
    <property type="project" value="FlyBase"/>
</dbReference>
<dbReference type="GO" id="GO:0005981">
    <property type="term" value="P:regulation of glycogen catabolic process"/>
    <property type="evidence" value="ECO:0000250"/>
    <property type="project" value="FlyBase"/>
</dbReference>
<dbReference type="GO" id="GO:1905330">
    <property type="term" value="P:regulation of morphogenesis of an epithelium"/>
    <property type="evidence" value="ECO:0000315"/>
    <property type="project" value="FlyBase"/>
</dbReference>
<dbReference type="GO" id="GO:0014706">
    <property type="term" value="P:striated muscle tissue development"/>
    <property type="evidence" value="ECO:0000315"/>
    <property type="project" value="FlyBase"/>
</dbReference>
<dbReference type="CDD" id="cd07414">
    <property type="entry name" value="MPP_PP1_PPKL"/>
    <property type="match status" value="1"/>
</dbReference>
<dbReference type="FunFam" id="3.60.21.10:FF:000007">
    <property type="entry name" value="Serine/threonine-protein phosphatase"/>
    <property type="match status" value="1"/>
</dbReference>
<dbReference type="Gene3D" id="3.60.21.10">
    <property type="match status" value="1"/>
</dbReference>
<dbReference type="InterPro" id="IPR004843">
    <property type="entry name" value="Calcineurin-like_PHP_ApaH"/>
</dbReference>
<dbReference type="InterPro" id="IPR029052">
    <property type="entry name" value="Metallo-depent_PP-like"/>
</dbReference>
<dbReference type="InterPro" id="IPR050341">
    <property type="entry name" value="PP1_catalytic_subunit"/>
</dbReference>
<dbReference type="InterPro" id="IPR006186">
    <property type="entry name" value="Ser/Thr-sp_prot-phosphatase"/>
</dbReference>
<dbReference type="InterPro" id="IPR031675">
    <property type="entry name" value="STPPase_N"/>
</dbReference>
<dbReference type="PANTHER" id="PTHR11668">
    <property type="entry name" value="SERINE/THREONINE PROTEIN PHOSPHATASE"/>
    <property type="match status" value="1"/>
</dbReference>
<dbReference type="PANTHER" id="PTHR11668:SF472">
    <property type="entry name" value="SERINE_THREONINE-PROTEIN PHOSPHATASE PP1-BETA CATALYTIC SUBUNIT"/>
    <property type="match status" value="1"/>
</dbReference>
<dbReference type="Pfam" id="PF00149">
    <property type="entry name" value="Metallophos"/>
    <property type="match status" value="1"/>
</dbReference>
<dbReference type="Pfam" id="PF16891">
    <property type="entry name" value="STPPase_N"/>
    <property type="match status" value="1"/>
</dbReference>
<dbReference type="PRINTS" id="PR00114">
    <property type="entry name" value="STPHPHTASE"/>
</dbReference>
<dbReference type="SMART" id="SM00156">
    <property type="entry name" value="PP2Ac"/>
    <property type="match status" value="1"/>
</dbReference>
<dbReference type="SUPFAM" id="SSF56300">
    <property type="entry name" value="Metallo-dependent phosphatases"/>
    <property type="match status" value="1"/>
</dbReference>
<dbReference type="PROSITE" id="PS00125">
    <property type="entry name" value="SER_THR_PHOSPHATASE"/>
    <property type="match status" value="1"/>
</dbReference>
<feature type="chain" id="PRO_0000058794" description="Serine/threonine-protein phosphatase beta isoform">
    <location>
        <begin position="1"/>
        <end position="330"/>
    </location>
</feature>
<feature type="region of interest" description="Disordered" evidence="2">
    <location>
        <begin position="308"/>
        <end position="330"/>
    </location>
</feature>
<feature type="compositionally biased region" description="Polar residues" evidence="2">
    <location>
        <begin position="308"/>
        <end position="319"/>
    </location>
</feature>
<feature type="active site" description="Proton donor" evidence="1">
    <location>
        <position position="124"/>
    </location>
</feature>
<feature type="binding site" evidence="1">
    <location>
        <position position="63"/>
    </location>
    <ligand>
        <name>Mn(2+)</name>
        <dbReference type="ChEBI" id="CHEBI:29035"/>
        <label>1</label>
    </ligand>
</feature>
<feature type="binding site" evidence="1">
    <location>
        <position position="65"/>
    </location>
    <ligand>
        <name>Mn(2+)</name>
        <dbReference type="ChEBI" id="CHEBI:29035"/>
        <label>1</label>
    </ligand>
</feature>
<feature type="binding site" evidence="1">
    <location>
        <position position="91"/>
    </location>
    <ligand>
        <name>Mn(2+)</name>
        <dbReference type="ChEBI" id="CHEBI:29035"/>
        <label>1</label>
    </ligand>
</feature>
<feature type="binding site" evidence="1">
    <location>
        <position position="91"/>
    </location>
    <ligand>
        <name>Mn(2+)</name>
        <dbReference type="ChEBI" id="CHEBI:29035"/>
        <label>2</label>
    </ligand>
</feature>
<feature type="binding site" evidence="1">
    <location>
        <position position="123"/>
    </location>
    <ligand>
        <name>Mn(2+)</name>
        <dbReference type="ChEBI" id="CHEBI:29035"/>
        <label>2</label>
    </ligand>
</feature>
<feature type="binding site" evidence="1">
    <location>
        <position position="172"/>
    </location>
    <ligand>
        <name>Mn(2+)</name>
        <dbReference type="ChEBI" id="CHEBI:29035"/>
        <label>2</label>
    </ligand>
</feature>
<feature type="binding site" evidence="1">
    <location>
        <position position="247"/>
    </location>
    <ligand>
        <name>Mn(2+)</name>
        <dbReference type="ChEBI" id="CHEBI:29035"/>
        <label>2</label>
    </ligand>
</feature>
<feature type="modified residue" description="Phosphothreonine" evidence="5">
    <location>
        <position position="315"/>
    </location>
</feature>
<feature type="modified residue" description="Phosphothreonine" evidence="5">
    <location>
        <position position="316"/>
    </location>
</feature>
<feature type="mutagenesis site" description="Semi lethal, adult escapers exhibit muscle and wing mutant phenotype; allele flw-6." evidence="3">
    <original>Y</original>
    <variation>F</variation>
    <location>
        <position position="133"/>
    </location>
</feature>
<feature type="mutagenesis site" description="Muscle and wing mutant phenotype; allele flw-1." evidence="3">
    <original>V</original>
    <variation>A</variation>
    <location>
        <position position="284"/>
    </location>
</feature>